<reference key="1">
    <citation type="journal article" date="2000" name="Nature">
        <title>DNA sequence of both chromosomes of the cholera pathogen Vibrio cholerae.</title>
        <authorList>
            <person name="Heidelberg J.F."/>
            <person name="Eisen J.A."/>
            <person name="Nelson W.C."/>
            <person name="Clayton R.A."/>
            <person name="Gwinn M.L."/>
            <person name="Dodson R.J."/>
            <person name="Haft D.H."/>
            <person name="Hickey E.K."/>
            <person name="Peterson J.D."/>
            <person name="Umayam L.A."/>
            <person name="Gill S.R."/>
            <person name="Nelson K.E."/>
            <person name="Read T.D."/>
            <person name="Tettelin H."/>
            <person name="Richardson D.L."/>
            <person name="Ermolaeva M.D."/>
            <person name="Vamathevan J.J."/>
            <person name="Bass S."/>
            <person name="Qin H."/>
            <person name="Dragoi I."/>
            <person name="Sellers P."/>
            <person name="McDonald L.A."/>
            <person name="Utterback T.R."/>
            <person name="Fleischmann R.D."/>
            <person name="Nierman W.C."/>
            <person name="White O."/>
            <person name="Salzberg S.L."/>
            <person name="Smith H.O."/>
            <person name="Colwell R.R."/>
            <person name="Mekalanos J.J."/>
            <person name="Venter J.C."/>
            <person name="Fraser C.M."/>
        </authorList>
    </citation>
    <scope>NUCLEOTIDE SEQUENCE [LARGE SCALE GENOMIC DNA]</scope>
    <source>
        <strain>ATCC 39315 / El Tor Inaba N16961</strain>
    </source>
</reference>
<comment type="catalytic activity">
    <reaction evidence="1">
        <text>D-mannitol 1-phosphate + NAD(+) = beta-D-fructose 6-phosphate + NADH + H(+)</text>
        <dbReference type="Rhea" id="RHEA:19661"/>
        <dbReference type="ChEBI" id="CHEBI:15378"/>
        <dbReference type="ChEBI" id="CHEBI:57540"/>
        <dbReference type="ChEBI" id="CHEBI:57634"/>
        <dbReference type="ChEBI" id="CHEBI:57945"/>
        <dbReference type="ChEBI" id="CHEBI:61381"/>
        <dbReference type="EC" id="1.1.1.17"/>
    </reaction>
</comment>
<comment type="similarity">
    <text evidence="1">Belongs to the mannitol dehydrogenase family.</text>
</comment>
<name>MTLD_VIBCH</name>
<feature type="chain" id="PRO_0000170729" description="Mannitol-1-phosphate 5-dehydrogenase">
    <location>
        <begin position="1"/>
        <end position="384"/>
    </location>
</feature>
<feature type="binding site" evidence="1">
    <location>
        <begin position="5"/>
        <end position="16"/>
    </location>
    <ligand>
        <name>NAD(+)</name>
        <dbReference type="ChEBI" id="CHEBI:57540"/>
    </ligand>
</feature>
<protein>
    <recommendedName>
        <fullName evidence="1">Mannitol-1-phosphate 5-dehydrogenase</fullName>
        <ecNumber evidence="1">1.1.1.17</ecNumber>
    </recommendedName>
</protein>
<organism>
    <name type="scientific">Vibrio cholerae serotype O1 (strain ATCC 39315 / El Tor Inaba N16961)</name>
    <dbReference type="NCBI Taxonomy" id="243277"/>
    <lineage>
        <taxon>Bacteria</taxon>
        <taxon>Pseudomonadati</taxon>
        <taxon>Pseudomonadota</taxon>
        <taxon>Gammaproteobacteria</taxon>
        <taxon>Vibrionales</taxon>
        <taxon>Vibrionaceae</taxon>
        <taxon>Vibrio</taxon>
    </lineage>
</organism>
<evidence type="ECO:0000255" key="1">
    <source>
        <dbReference type="HAMAP-Rule" id="MF_00196"/>
    </source>
</evidence>
<sequence length="384" mass="42340">MKKNAVHFGAGNIGRGFIGKLLADADIAVTFADVNEPLVDQLSHQQEYKVKVVGSECKMETVSHVTAVNSASEALIERIIKTDLVTTAVGPTVLDIIAKTIAKGLSARFAAGNTQPLNIIACENMVRGTTHLKQQVYQFLTTEEQQQADALVGFVDSAVDRIVPPLQAANDDPLEVTVESFSEWIVDEQQFKGEIPQIEGMEKTDNLMAFVERKLFTLNTGHCVTAYLGCLKGHRTIREAIEDPCIHAQVKQAMQESGEVLIRRYGFDRALHSAYIEKILSRFANPYLVDEVDRVGRQPLRKLSANDRLIKPLLGTIEYGLPNGMLLKGIAAALKYRNSSDPQAVELQQSIEKEGVRSTLARYTGLAAESVEAQQIEALYQQMD</sequence>
<keyword id="KW-0520">NAD</keyword>
<keyword id="KW-0560">Oxidoreductase</keyword>
<keyword id="KW-1185">Reference proteome</keyword>
<gene>
    <name evidence="1" type="primary">mtlD</name>
    <name type="ordered locus">VC_A1046</name>
</gene>
<proteinExistence type="inferred from homology"/>
<dbReference type="EC" id="1.1.1.17" evidence="1"/>
<dbReference type="EMBL" id="AE003853">
    <property type="protein sequence ID" value="AAF96940.1"/>
    <property type="molecule type" value="Genomic_DNA"/>
</dbReference>
<dbReference type="PIR" id="C82385">
    <property type="entry name" value="C82385"/>
</dbReference>
<dbReference type="RefSeq" id="NP_233428.1">
    <property type="nucleotide sequence ID" value="NC_002506.1"/>
</dbReference>
<dbReference type="RefSeq" id="WP_000739122.1">
    <property type="nucleotide sequence ID" value="NZ_LT906615.1"/>
</dbReference>
<dbReference type="SMR" id="Q9KKQ6"/>
<dbReference type="STRING" id="243277.VC_A1046"/>
<dbReference type="DNASU" id="2612121"/>
<dbReference type="EnsemblBacteria" id="AAF96940">
    <property type="protein sequence ID" value="AAF96940"/>
    <property type="gene ID" value="VC_A1046"/>
</dbReference>
<dbReference type="KEGG" id="vch:VC_A1046"/>
<dbReference type="PATRIC" id="fig|243277.26.peg.3652"/>
<dbReference type="eggNOG" id="COG0246">
    <property type="taxonomic scope" value="Bacteria"/>
</dbReference>
<dbReference type="HOGENOM" id="CLU_036089_2_0_6"/>
<dbReference type="Proteomes" id="UP000000584">
    <property type="component" value="Chromosome 2"/>
</dbReference>
<dbReference type="GO" id="GO:0005829">
    <property type="term" value="C:cytosol"/>
    <property type="evidence" value="ECO:0000318"/>
    <property type="project" value="GO_Central"/>
</dbReference>
<dbReference type="GO" id="GO:0008926">
    <property type="term" value="F:mannitol-1-phosphate 5-dehydrogenase activity"/>
    <property type="evidence" value="ECO:0000318"/>
    <property type="project" value="GO_Central"/>
</dbReference>
<dbReference type="GO" id="GO:0019592">
    <property type="term" value="P:mannitol catabolic process"/>
    <property type="evidence" value="ECO:0000318"/>
    <property type="project" value="GO_Central"/>
</dbReference>
<dbReference type="FunFam" id="1.10.1040.10:FF:000009">
    <property type="entry name" value="Mannitol-1-phosphate 5-dehydrogenase"/>
    <property type="match status" value="1"/>
</dbReference>
<dbReference type="FunFam" id="3.40.50.720:FF:000075">
    <property type="entry name" value="Mannitol-1-phosphate 5-dehydrogenase"/>
    <property type="match status" value="1"/>
</dbReference>
<dbReference type="Gene3D" id="1.10.1040.10">
    <property type="entry name" value="N-(1-d-carboxylethyl)-l-norvaline Dehydrogenase, domain 2"/>
    <property type="match status" value="1"/>
</dbReference>
<dbReference type="Gene3D" id="3.40.50.720">
    <property type="entry name" value="NAD(P)-binding Rossmann-like Domain"/>
    <property type="match status" value="1"/>
</dbReference>
<dbReference type="HAMAP" id="MF_00196">
    <property type="entry name" value="Mannitol_dehydrog"/>
    <property type="match status" value="1"/>
</dbReference>
<dbReference type="InterPro" id="IPR008927">
    <property type="entry name" value="6-PGluconate_DH-like_C_sf"/>
</dbReference>
<dbReference type="InterPro" id="IPR013328">
    <property type="entry name" value="6PGD_dom2"/>
</dbReference>
<dbReference type="InterPro" id="IPR023028">
    <property type="entry name" value="Mannitol_1_phos_5_DH"/>
</dbReference>
<dbReference type="InterPro" id="IPR000669">
    <property type="entry name" value="Mannitol_DH"/>
</dbReference>
<dbReference type="InterPro" id="IPR013118">
    <property type="entry name" value="Mannitol_DH_C"/>
</dbReference>
<dbReference type="InterPro" id="IPR023027">
    <property type="entry name" value="Mannitol_DH_CS"/>
</dbReference>
<dbReference type="InterPro" id="IPR013131">
    <property type="entry name" value="Mannitol_DH_N"/>
</dbReference>
<dbReference type="InterPro" id="IPR036291">
    <property type="entry name" value="NAD(P)-bd_dom_sf"/>
</dbReference>
<dbReference type="NCBIfam" id="NF002646">
    <property type="entry name" value="PRK02318.1-2"/>
    <property type="match status" value="1"/>
</dbReference>
<dbReference type="NCBIfam" id="NF002647">
    <property type="entry name" value="PRK02318.1-3"/>
    <property type="match status" value="1"/>
</dbReference>
<dbReference type="NCBIfam" id="NF002650">
    <property type="entry name" value="PRK02318.2-2"/>
    <property type="match status" value="1"/>
</dbReference>
<dbReference type="NCBIfam" id="NF002652">
    <property type="entry name" value="PRK02318.2-5"/>
    <property type="match status" value="1"/>
</dbReference>
<dbReference type="PANTHER" id="PTHR30524:SF0">
    <property type="entry name" value="ALTRONATE OXIDOREDUCTASE-RELATED"/>
    <property type="match status" value="1"/>
</dbReference>
<dbReference type="PANTHER" id="PTHR30524">
    <property type="entry name" value="MANNITOL-1-PHOSPHATE 5-DEHYDROGENASE"/>
    <property type="match status" value="1"/>
</dbReference>
<dbReference type="Pfam" id="PF01232">
    <property type="entry name" value="Mannitol_dh"/>
    <property type="match status" value="1"/>
</dbReference>
<dbReference type="Pfam" id="PF08125">
    <property type="entry name" value="Mannitol_dh_C"/>
    <property type="match status" value="1"/>
</dbReference>
<dbReference type="PRINTS" id="PR00084">
    <property type="entry name" value="MTLDHDRGNASE"/>
</dbReference>
<dbReference type="SUPFAM" id="SSF48179">
    <property type="entry name" value="6-phosphogluconate dehydrogenase C-terminal domain-like"/>
    <property type="match status" value="1"/>
</dbReference>
<dbReference type="SUPFAM" id="SSF51735">
    <property type="entry name" value="NAD(P)-binding Rossmann-fold domains"/>
    <property type="match status" value="1"/>
</dbReference>
<dbReference type="PROSITE" id="PS00974">
    <property type="entry name" value="MANNITOL_DHGENASE"/>
    <property type="match status" value="1"/>
</dbReference>
<accession>Q9KKQ6</accession>